<evidence type="ECO:0000255" key="1">
    <source>
        <dbReference type="HAMAP-Rule" id="MF_00018"/>
    </source>
</evidence>
<evidence type="ECO:0000255" key="2">
    <source>
        <dbReference type="PROSITE-ProRule" id="PRU01182"/>
    </source>
</evidence>
<sequence length="221" mass="24890">MDTLDELLPREKMLRSGIASLSDVELLALFLRTGTPGKDVMTLAKEILQHFGSLYGLLSADFAQFRGVNGIGLAKFAQLKGIAELARRYYSVRMNEESALLSPEMTREFLQSQLTGEEREIFLVIFLDAQHRVLQHSRLFSGTLNHVEVHPREIVREAIKLNASAVILAHNHPSGCAEPSKADKLITERVIKCCQFMDIRVLDHLIIGRGEYVSFAERGWI</sequence>
<organism>
    <name type="scientific">Salmonella paratyphi C (strain RKS4594)</name>
    <dbReference type="NCBI Taxonomy" id="476213"/>
    <lineage>
        <taxon>Bacteria</taxon>
        <taxon>Pseudomonadati</taxon>
        <taxon>Pseudomonadota</taxon>
        <taxon>Gammaproteobacteria</taxon>
        <taxon>Enterobacterales</taxon>
        <taxon>Enterobacteriaceae</taxon>
        <taxon>Salmonella</taxon>
    </lineage>
</organism>
<reference key="1">
    <citation type="journal article" date="2009" name="PLoS ONE">
        <title>Salmonella paratyphi C: genetic divergence from Salmonella choleraesuis and pathogenic convergence with Salmonella typhi.</title>
        <authorList>
            <person name="Liu W.-Q."/>
            <person name="Feng Y."/>
            <person name="Wang Y."/>
            <person name="Zou Q.-H."/>
            <person name="Chen F."/>
            <person name="Guo J.-T."/>
            <person name="Peng Y.-H."/>
            <person name="Jin Y."/>
            <person name="Li Y.-G."/>
            <person name="Hu S.-N."/>
            <person name="Johnston R.N."/>
            <person name="Liu G.-R."/>
            <person name="Liu S.-L."/>
        </authorList>
    </citation>
    <scope>NUCLEOTIDE SEQUENCE [LARGE SCALE GENOMIC DNA]</scope>
    <source>
        <strain>RKS4594</strain>
    </source>
</reference>
<gene>
    <name evidence="1" type="primary">yicR</name>
    <name type="ordered locus">SPC_3811</name>
</gene>
<proteinExistence type="inferred from homology"/>
<protein>
    <recommendedName>
        <fullName evidence="1">UPF0758 protein YicR</fullName>
    </recommendedName>
</protein>
<keyword id="KW-0378">Hydrolase</keyword>
<keyword id="KW-0479">Metal-binding</keyword>
<keyword id="KW-0482">Metalloprotease</keyword>
<keyword id="KW-0645">Protease</keyword>
<keyword id="KW-0862">Zinc</keyword>
<dbReference type="EMBL" id="CP000857">
    <property type="protein sequence ID" value="ACN47887.1"/>
    <property type="molecule type" value="Genomic_DNA"/>
</dbReference>
<dbReference type="SMR" id="C0Q1X1"/>
<dbReference type="KEGG" id="sei:SPC_3811"/>
<dbReference type="HOGENOM" id="CLU_073529_0_1_6"/>
<dbReference type="Proteomes" id="UP000001599">
    <property type="component" value="Chromosome"/>
</dbReference>
<dbReference type="GO" id="GO:0046872">
    <property type="term" value="F:metal ion binding"/>
    <property type="evidence" value="ECO:0007669"/>
    <property type="project" value="UniProtKB-KW"/>
</dbReference>
<dbReference type="GO" id="GO:0008237">
    <property type="term" value="F:metallopeptidase activity"/>
    <property type="evidence" value="ECO:0007669"/>
    <property type="project" value="UniProtKB-KW"/>
</dbReference>
<dbReference type="GO" id="GO:0006508">
    <property type="term" value="P:proteolysis"/>
    <property type="evidence" value="ECO:0007669"/>
    <property type="project" value="UniProtKB-KW"/>
</dbReference>
<dbReference type="CDD" id="cd08071">
    <property type="entry name" value="MPN_DUF2466"/>
    <property type="match status" value="1"/>
</dbReference>
<dbReference type="Gene3D" id="3.40.140.10">
    <property type="entry name" value="Cytidine Deaminase, domain 2"/>
    <property type="match status" value="1"/>
</dbReference>
<dbReference type="HAMAP" id="MF_00018">
    <property type="entry name" value="UPF0758_YicR"/>
    <property type="match status" value="1"/>
</dbReference>
<dbReference type="InterPro" id="IPR037518">
    <property type="entry name" value="MPN"/>
</dbReference>
<dbReference type="InterPro" id="IPR025657">
    <property type="entry name" value="RadC_JAB"/>
</dbReference>
<dbReference type="InterPro" id="IPR010994">
    <property type="entry name" value="RuvA_2-like"/>
</dbReference>
<dbReference type="InterPro" id="IPR001405">
    <property type="entry name" value="UPF0758"/>
</dbReference>
<dbReference type="InterPro" id="IPR020891">
    <property type="entry name" value="UPF0758_CS"/>
</dbReference>
<dbReference type="InterPro" id="IPR046778">
    <property type="entry name" value="UPF0758_N"/>
</dbReference>
<dbReference type="InterPro" id="IPR022820">
    <property type="entry name" value="UPF0758_YicR"/>
</dbReference>
<dbReference type="NCBIfam" id="NF000642">
    <property type="entry name" value="PRK00024.1"/>
    <property type="match status" value="1"/>
</dbReference>
<dbReference type="NCBIfam" id="TIGR00608">
    <property type="entry name" value="radc"/>
    <property type="match status" value="1"/>
</dbReference>
<dbReference type="PANTHER" id="PTHR30471">
    <property type="entry name" value="DNA REPAIR PROTEIN RADC"/>
    <property type="match status" value="1"/>
</dbReference>
<dbReference type="PANTHER" id="PTHR30471:SF3">
    <property type="entry name" value="UPF0758 PROTEIN YEES-RELATED"/>
    <property type="match status" value="1"/>
</dbReference>
<dbReference type="Pfam" id="PF04002">
    <property type="entry name" value="RadC"/>
    <property type="match status" value="1"/>
</dbReference>
<dbReference type="Pfam" id="PF20582">
    <property type="entry name" value="UPF0758_N"/>
    <property type="match status" value="1"/>
</dbReference>
<dbReference type="SUPFAM" id="SSF47781">
    <property type="entry name" value="RuvA domain 2-like"/>
    <property type="match status" value="1"/>
</dbReference>
<dbReference type="PROSITE" id="PS50249">
    <property type="entry name" value="MPN"/>
    <property type="match status" value="1"/>
</dbReference>
<dbReference type="PROSITE" id="PS01302">
    <property type="entry name" value="UPF0758"/>
    <property type="match status" value="1"/>
</dbReference>
<name>YICR_SALPC</name>
<accession>C0Q1X1</accession>
<feature type="chain" id="PRO_1000195303" description="UPF0758 protein YicR">
    <location>
        <begin position="1"/>
        <end position="221"/>
    </location>
</feature>
<feature type="domain" description="MPN" evidence="2">
    <location>
        <begin position="99"/>
        <end position="221"/>
    </location>
</feature>
<feature type="short sequence motif" description="JAMM motif" evidence="2">
    <location>
        <begin position="170"/>
        <end position="183"/>
    </location>
</feature>
<feature type="binding site" evidence="2">
    <location>
        <position position="170"/>
    </location>
    <ligand>
        <name>Zn(2+)</name>
        <dbReference type="ChEBI" id="CHEBI:29105"/>
        <note>catalytic</note>
    </ligand>
</feature>
<feature type="binding site" evidence="2">
    <location>
        <position position="172"/>
    </location>
    <ligand>
        <name>Zn(2+)</name>
        <dbReference type="ChEBI" id="CHEBI:29105"/>
        <note>catalytic</note>
    </ligand>
</feature>
<feature type="binding site" evidence="2">
    <location>
        <position position="183"/>
    </location>
    <ligand>
        <name>Zn(2+)</name>
        <dbReference type="ChEBI" id="CHEBI:29105"/>
        <note>catalytic</note>
    </ligand>
</feature>
<comment type="similarity">
    <text evidence="1">Belongs to the UPF0758 family. YicR subfamily.</text>
</comment>